<sequence>MDQSNRYADLTLTEEKLVADGNHLLVAYRLKPAAGYGFLEVAAHVAAESSTGTNVEVSTTDDFTRGVDALVYEIDEAAFGDKGGLMKIAYPVDLFDPNLIDGHYNVSHMWSLILGNNQGMGDHEGLRMLDFLVPEKMVKRFDGPATDISDLWKVLGRPEVDGGYIAGTIIKPKLGLRPEPFAKACYDFWLGGDFIKNDEPQANQNFCPMEVVIPKVAEAMDRAQQATGQAKLFSANVTADFHEEMIKRGEYVLGEFAKYGNEKHVAFLVDGFVTGPAGVTTSRRAFPDTYLHFHRAGHGAVTSYKSPMGMDPLCYMKLARLMGASGIHTGTMGYGKMEGHNDERVLAYMLERDECQGPYFYQKWYGMKPTTPIISGGMDALRLPGFFENLGHGNVINTCGGGSFGHIDSPAAGGISLGQAYACWKTGAEPIEAPREFARAFESFPGDADKIFPGWREKLGVHK</sequence>
<reference key="1">
    <citation type="journal article" date="1994" name="Biosci. Biotechnol. Biochem.">
        <title>Cloning and sequence of the L2 form of RubisCO from a marine obligately autotrophic hydrogen-oxidizing bacterium, Hydrogenovibrio marinus strain MH-110.</title>
        <authorList>
            <person name="Yaguchi T."/>
            <person name="Chung S.Y."/>
            <person name="Igarashi Y."/>
            <person name="Kodama T."/>
        </authorList>
    </citation>
    <scope>NUCLEOTIDE SEQUENCE [GENOMIC DNA]</scope>
    <scope>OPERON ORGANIZATION</scope>
    <source>
        <strain>DSM 11271 / JCM 7688 / MH-110</strain>
    </source>
</reference>
<reference key="2">
    <citation type="journal article" date="1993" name="FEMS Microbiol. Lett.">
        <title>Purification of form L2 RubisCO from a marine obligately autotrophic hydrogen-oxidizing bacterium, Hydrogenovibrio marinus strain MH-110.</title>
        <authorList>
            <person name="Chung S.Y."/>
            <person name="Yaguchi T."/>
            <person name="Nishihara H."/>
            <person name="Igarashi Y."/>
            <person name="Kodama T."/>
        </authorList>
    </citation>
    <scope>PROTEIN SEQUENCE OF 2-31</scope>
    <scope>SUBUNIT</scope>
    <source>
        <strain>DSM 11271 / JCM 7688 / MH-110</strain>
    </source>
</reference>
<reference key="3">
    <citation type="journal article" date="2004" name="J. Bacteriol.">
        <title>CO2-responsive expression and gene organization of three ribulose-1,5-bisphosphate carboxylase/oxygenase enzymes and carboxysomes in Hydrogenovibrio marinus strain MH-110.</title>
        <authorList>
            <person name="Yoshizawa Y."/>
            <person name="Toyoda K."/>
            <person name="Arai H."/>
            <person name="Ishii M."/>
            <person name="Igarashi Y."/>
        </authorList>
    </citation>
    <scope>NUCLEOTIDE SEQUENCE [GENOMIC DNA]</scope>
    <scope>INDUCTION OF EXPRESSION BY CO(2) IN H.MARINUS</scope>
    <source>
        <strain>DSM 11271 / JCM 7688 / MH-110</strain>
    </source>
</reference>
<reference key="4">
    <citation type="journal article" date="1998" name="J. Ferment. Bioeng.">
        <title>Different properties of gene products of three sets ribulose 1,5-bisphosphate carboxylase/oxygenase from a marine obligately autotrophic hydrogen-oxidizing bacterium, Hydrogenovibrio marinus strain MH-110.</title>
        <authorList>
            <person name="Hayashi N.R."/>
            <person name="Oguni A."/>
            <person name="Yaguchi T."/>
            <person name="Chung S.-Y."/>
            <person name="Nishihara H."/>
            <person name="Kodama T."/>
            <person name="Igarashi Y."/>
        </authorList>
    </citation>
    <scope>CHARACTERIZATION IN E.COLI</scope>
    <scope>FUNCTION</scope>
    <scope>BIOPHYSICOCHEMICAL PROPERTIES</scope>
    <scope>SUBUNIT</scope>
    <source>
        <strain>DSM 11271 / JCM 7688 / MH-110</strain>
    </source>
</reference>
<name>RBL2_HYDMR</name>
<keyword id="KW-0113">Calvin cycle</keyword>
<keyword id="KW-0120">Carbon dioxide fixation</keyword>
<keyword id="KW-0903">Direct protein sequencing</keyword>
<keyword id="KW-0456">Lyase</keyword>
<keyword id="KW-0460">Magnesium</keyword>
<keyword id="KW-0479">Metal-binding</keyword>
<keyword id="KW-0503">Monooxygenase</keyword>
<keyword id="KW-0560">Oxidoreductase</keyword>
<comment type="function">
    <text evidence="4">RuBisCO catalyzes two reactions: the carboxylation of D-ribulose 1,5-bisphosphate, the primary event in carbon dioxide fixation, as well as the oxidative fragmentation of the pentose substrate. Both reactions occur simultaneously and in competition at the same active site.</text>
</comment>
<comment type="catalytic activity">
    <reaction evidence="4">
        <text>2 (2R)-3-phosphoglycerate + 2 H(+) = D-ribulose 1,5-bisphosphate + CO2 + H2O</text>
        <dbReference type="Rhea" id="RHEA:23124"/>
        <dbReference type="ChEBI" id="CHEBI:15377"/>
        <dbReference type="ChEBI" id="CHEBI:15378"/>
        <dbReference type="ChEBI" id="CHEBI:16526"/>
        <dbReference type="ChEBI" id="CHEBI:57870"/>
        <dbReference type="ChEBI" id="CHEBI:58272"/>
        <dbReference type="EC" id="4.1.1.39"/>
    </reaction>
</comment>
<comment type="catalytic activity">
    <reaction evidence="4">
        <text>D-ribulose 1,5-bisphosphate + O2 = 2-phosphoglycolate + (2R)-3-phosphoglycerate + 2 H(+)</text>
        <dbReference type="Rhea" id="RHEA:36631"/>
        <dbReference type="ChEBI" id="CHEBI:15378"/>
        <dbReference type="ChEBI" id="CHEBI:15379"/>
        <dbReference type="ChEBI" id="CHEBI:57870"/>
        <dbReference type="ChEBI" id="CHEBI:58033"/>
        <dbReference type="ChEBI" id="CHEBI:58272"/>
    </reaction>
</comment>
<comment type="cofactor">
    <cofactor evidence="1">
        <name>Mg(2+)</name>
        <dbReference type="ChEBI" id="CHEBI:18420"/>
    </cofactor>
    <text evidence="1">Binds 1 Mg(2+) ion per subunit.</text>
</comment>
<comment type="biophysicochemical properties">
    <kinetics>
        <Vmax evidence="4">0.003 umol/min/mg enzyme with CO(2) as substrate, expressed in E.coli</Vmax>
        <text evidence="4">The CO(2)/O(2) specificity factor (tau) is 14.8.</text>
    </kinetics>
</comment>
<comment type="subunit">
    <text evidence="3 4">Homodimer.</text>
</comment>
<comment type="induction">
    <text evidence="2">mRNA expression is constant at all CO(2) concentrations tested, however more protein accumulates at 15% and 2% CO(2) than at 0.15% and 0.03% CO(2) (at protein level).</text>
</comment>
<comment type="miscellaneous">
    <text evidence="1">The basic functional RuBisCO is composed of a large chain homodimer in a 'head-to-tail' conformation. In contrast to form I RuBisCO, the form II RuBisCO are composed solely of large subunits (By similarity).</text>
</comment>
<comment type="similarity">
    <text evidence="7 8">Belongs to the RuBisCO large chain family. Type II subfamily.</text>
</comment>
<feature type="initiator methionine" description="Removed" evidence="3">
    <location>
        <position position="1"/>
    </location>
</feature>
<feature type="chain" id="PRO_0000062662" description="Ribulose bisphosphate carboxylase">
    <location>
        <begin position="2"/>
        <end position="463"/>
    </location>
</feature>
<feature type="active site" description="Proton acceptor" evidence="1">
    <location>
        <position position="171"/>
    </location>
</feature>
<feature type="active site" description="Proton acceptor" evidence="1">
    <location>
        <position position="294"/>
    </location>
</feature>
<feature type="binding site" description="in homodimeric partner" evidence="1">
    <location>
        <position position="116"/>
    </location>
    <ligand>
        <name>substrate</name>
    </ligand>
</feature>
<feature type="binding site" evidence="1">
    <location>
        <position position="173"/>
    </location>
    <ligand>
        <name>substrate</name>
    </ligand>
</feature>
<feature type="binding site" description="via carbamate group" evidence="1">
    <location>
        <position position="196"/>
    </location>
    <ligand>
        <name>Mg(2+)</name>
        <dbReference type="ChEBI" id="CHEBI:18420"/>
    </ligand>
</feature>
<feature type="binding site" evidence="1">
    <location>
        <position position="198"/>
    </location>
    <ligand>
        <name>Mg(2+)</name>
        <dbReference type="ChEBI" id="CHEBI:18420"/>
    </ligand>
</feature>
<feature type="binding site" evidence="1">
    <location>
        <position position="199"/>
    </location>
    <ligand>
        <name>Mg(2+)</name>
        <dbReference type="ChEBI" id="CHEBI:18420"/>
    </ligand>
</feature>
<feature type="binding site" evidence="1">
    <location>
        <position position="295"/>
    </location>
    <ligand>
        <name>substrate</name>
    </ligand>
</feature>
<feature type="binding site" evidence="1">
    <location>
        <position position="328"/>
    </location>
    <ligand>
        <name>substrate</name>
    </ligand>
</feature>
<feature type="binding site" evidence="1">
    <location>
        <position position="375"/>
    </location>
    <ligand>
        <name>substrate</name>
    </ligand>
</feature>
<feature type="site" description="Transition state stabilizer" evidence="1">
    <location>
        <position position="336"/>
    </location>
</feature>
<feature type="modified residue" description="N6-carboxylysine" evidence="1">
    <location>
        <position position="196"/>
    </location>
</feature>
<feature type="sequence conflict" description="In Ref. 3; BAD15326." evidence="6" ref="3">
    <original>D</original>
    <variation>N</variation>
    <location>
        <position position="379"/>
    </location>
</feature>
<feature type="sequence conflict" description="In Ref. 3; BAD15326." evidence="6" ref="3">
    <original>A</original>
    <variation>D</variation>
    <location>
        <position position="422"/>
    </location>
</feature>
<feature type="sequence conflict" description="In Ref. 3; BAD15326." evidence="6" ref="3">
    <original>E</original>
    <variation>D</variation>
    <location>
        <position position="429"/>
    </location>
</feature>
<feature type="sequence conflict" description="In Ref. 3; BAD15326." evidence="6" ref="3">
    <original>APR</original>
    <variation>YAKEHP</variation>
    <location>
        <begin position="433"/>
        <end position="435"/>
    </location>
</feature>
<evidence type="ECO:0000250" key="1"/>
<evidence type="ECO:0000269" key="2">
    <source>
    </source>
</evidence>
<evidence type="ECO:0000269" key="3">
    <source>
    </source>
</evidence>
<evidence type="ECO:0000269" key="4">
    <source ref="4"/>
</evidence>
<evidence type="ECO:0000303" key="5">
    <source>
    </source>
</evidence>
<evidence type="ECO:0000305" key="6"/>
<evidence type="ECO:0000305" key="7">
    <source>
    </source>
</evidence>
<evidence type="ECO:0000305" key="8">
    <source>
    </source>
</evidence>
<dbReference type="EC" id="4.1.1.39"/>
<dbReference type="EMBL" id="D28135">
    <property type="protein sequence ID" value="BAA05677.1"/>
    <property type="molecule type" value="Genomic_DNA"/>
</dbReference>
<dbReference type="EMBL" id="AB122071">
    <property type="protein sequence ID" value="BAD15326.1"/>
    <property type="molecule type" value="Genomic_DNA"/>
</dbReference>
<dbReference type="PIR" id="JC2307">
    <property type="entry name" value="JC2307"/>
</dbReference>
<dbReference type="RefSeq" id="WP_029912625.1">
    <property type="nucleotide sequence ID" value="NZ_JMIU01000001.1"/>
</dbReference>
<dbReference type="SMR" id="Q59462"/>
<dbReference type="STRING" id="28885.EI16_09265"/>
<dbReference type="GO" id="GO:0000287">
    <property type="term" value="F:magnesium ion binding"/>
    <property type="evidence" value="ECO:0007669"/>
    <property type="project" value="UniProtKB-UniRule"/>
</dbReference>
<dbReference type="GO" id="GO:0004497">
    <property type="term" value="F:monooxygenase activity"/>
    <property type="evidence" value="ECO:0007669"/>
    <property type="project" value="UniProtKB-KW"/>
</dbReference>
<dbReference type="GO" id="GO:0016984">
    <property type="term" value="F:ribulose-bisphosphate carboxylase activity"/>
    <property type="evidence" value="ECO:0007669"/>
    <property type="project" value="UniProtKB-UniRule"/>
</dbReference>
<dbReference type="GO" id="GO:0019253">
    <property type="term" value="P:reductive pentose-phosphate cycle"/>
    <property type="evidence" value="ECO:0007669"/>
    <property type="project" value="UniProtKB-KW"/>
</dbReference>
<dbReference type="CDD" id="cd08211">
    <property type="entry name" value="RuBisCO_large_II"/>
    <property type="match status" value="1"/>
</dbReference>
<dbReference type="Gene3D" id="3.20.20.110">
    <property type="entry name" value="Ribulose bisphosphate carboxylase, large subunit, C-terminal domain"/>
    <property type="match status" value="1"/>
</dbReference>
<dbReference type="Gene3D" id="3.30.70.150">
    <property type="entry name" value="RuBisCO large subunit, N-terminal domain"/>
    <property type="match status" value="1"/>
</dbReference>
<dbReference type="HAMAP" id="MF_01339">
    <property type="entry name" value="RuBisCO_L_type2"/>
    <property type="match status" value="1"/>
</dbReference>
<dbReference type="InterPro" id="IPR033966">
    <property type="entry name" value="RuBisCO"/>
</dbReference>
<dbReference type="InterPro" id="IPR020878">
    <property type="entry name" value="RuBisCo_large_chain_AS"/>
</dbReference>
<dbReference type="InterPro" id="IPR000685">
    <property type="entry name" value="RuBisCO_lsu_C"/>
</dbReference>
<dbReference type="InterPro" id="IPR036376">
    <property type="entry name" value="RuBisCO_lsu_C_sf"/>
</dbReference>
<dbReference type="InterPro" id="IPR017443">
    <property type="entry name" value="RuBisCO_lsu_fd_N"/>
</dbReference>
<dbReference type="InterPro" id="IPR036422">
    <property type="entry name" value="RuBisCO_lsu_N_sf"/>
</dbReference>
<dbReference type="InterPro" id="IPR020871">
    <property type="entry name" value="RuBisCO_lsuII"/>
</dbReference>
<dbReference type="NCBIfam" id="NF010002">
    <property type="entry name" value="PRK13475.1"/>
    <property type="match status" value="1"/>
</dbReference>
<dbReference type="PANTHER" id="PTHR42704">
    <property type="entry name" value="RIBULOSE BISPHOSPHATE CARBOXYLASE"/>
    <property type="match status" value="1"/>
</dbReference>
<dbReference type="PANTHER" id="PTHR42704:SF17">
    <property type="entry name" value="RIBULOSE BISPHOSPHATE CARBOXYLASE LARGE CHAIN"/>
    <property type="match status" value="1"/>
</dbReference>
<dbReference type="Pfam" id="PF00016">
    <property type="entry name" value="RuBisCO_large"/>
    <property type="match status" value="1"/>
</dbReference>
<dbReference type="Pfam" id="PF02788">
    <property type="entry name" value="RuBisCO_large_N"/>
    <property type="match status" value="1"/>
</dbReference>
<dbReference type="SUPFAM" id="SSF51649">
    <property type="entry name" value="RuBisCo, C-terminal domain"/>
    <property type="match status" value="1"/>
</dbReference>
<dbReference type="SUPFAM" id="SSF54966">
    <property type="entry name" value="RuBisCO, large subunit, small (N-terminal) domain"/>
    <property type="match status" value="1"/>
</dbReference>
<dbReference type="PROSITE" id="PS00157">
    <property type="entry name" value="RUBISCO_LARGE"/>
    <property type="match status" value="1"/>
</dbReference>
<protein>
    <recommendedName>
        <fullName>Ribulose bisphosphate carboxylase</fullName>
        <shortName>RuBisCO</shortName>
        <ecNumber>4.1.1.39</ecNumber>
    </recommendedName>
</protein>
<accession>Q59462</accession>
<accession>Q75W26</accession>
<proteinExistence type="evidence at protein level"/>
<gene>
    <name evidence="5" type="primary">cbbM</name>
    <name type="synonym">cbbL-3</name>
</gene>
<organism>
    <name type="scientific">Hydrogenovibrio marinus</name>
    <dbReference type="NCBI Taxonomy" id="28885"/>
    <lineage>
        <taxon>Bacteria</taxon>
        <taxon>Pseudomonadati</taxon>
        <taxon>Pseudomonadota</taxon>
        <taxon>Gammaproteobacteria</taxon>
        <taxon>Thiotrichales</taxon>
        <taxon>Piscirickettsiaceae</taxon>
        <taxon>Hydrogenovibrio</taxon>
    </lineage>
</organism>